<keyword id="KW-1003">Cell membrane</keyword>
<keyword id="KW-0472">Membrane</keyword>
<keyword id="KW-1185">Reference proteome</keyword>
<keyword id="KW-0812">Transmembrane</keyword>
<keyword id="KW-1133">Transmembrane helix</keyword>
<gene>
    <name evidence="5" type="primary">PGR</name>
    <name evidence="7" type="ordered locus">At5g19930</name>
    <name evidence="6" type="ORF">F28I16.80</name>
</gene>
<name>PGR_ARATH</name>
<reference key="1">
    <citation type="journal article" date="2000" name="Nature">
        <title>Sequence and analysis of chromosome 5 of the plant Arabidopsis thaliana.</title>
        <authorList>
            <person name="Tabata S."/>
            <person name="Kaneko T."/>
            <person name="Nakamura Y."/>
            <person name="Kotani H."/>
            <person name="Kato T."/>
            <person name="Asamizu E."/>
            <person name="Miyajima N."/>
            <person name="Sasamoto S."/>
            <person name="Kimura T."/>
            <person name="Hosouchi T."/>
            <person name="Kawashima K."/>
            <person name="Kohara M."/>
            <person name="Matsumoto M."/>
            <person name="Matsuno A."/>
            <person name="Muraki A."/>
            <person name="Nakayama S."/>
            <person name="Nakazaki N."/>
            <person name="Naruo K."/>
            <person name="Okumura S."/>
            <person name="Shinpo S."/>
            <person name="Takeuchi C."/>
            <person name="Wada T."/>
            <person name="Watanabe A."/>
            <person name="Yamada M."/>
            <person name="Yasuda M."/>
            <person name="Sato S."/>
            <person name="de la Bastide M."/>
            <person name="Huang E."/>
            <person name="Spiegel L."/>
            <person name="Gnoj L."/>
            <person name="O'Shaughnessy A."/>
            <person name="Preston R."/>
            <person name="Habermann K."/>
            <person name="Murray J."/>
            <person name="Johnson D."/>
            <person name="Rohlfing T."/>
            <person name="Nelson J."/>
            <person name="Stoneking T."/>
            <person name="Pepin K."/>
            <person name="Spieth J."/>
            <person name="Sekhon M."/>
            <person name="Armstrong J."/>
            <person name="Becker M."/>
            <person name="Belter E."/>
            <person name="Cordum H."/>
            <person name="Cordes M."/>
            <person name="Courtney L."/>
            <person name="Courtney W."/>
            <person name="Dante M."/>
            <person name="Du H."/>
            <person name="Edwards J."/>
            <person name="Fryman J."/>
            <person name="Haakensen B."/>
            <person name="Lamar E."/>
            <person name="Latreille P."/>
            <person name="Leonard S."/>
            <person name="Meyer R."/>
            <person name="Mulvaney E."/>
            <person name="Ozersky P."/>
            <person name="Riley A."/>
            <person name="Strowmatt C."/>
            <person name="Wagner-McPherson C."/>
            <person name="Wollam A."/>
            <person name="Yoakum M."/>
            <person name="Bell M."/>
            <person name="Dedhia N."/>
            <person name="Parnell L."/>
            <person name="Shah R."/>
            <person name="Rodriguez M."/>
            <person name="Hoon See L."/>
            <person name="Vil D."/>
            <person name="Baker J."/>
            <person name="Kirchoff K."/>
            <person name="Toth K."/>
            <person name="King L."/>
            <person name="Bahret A."/>
            <person name="Miller B."/>
            <person name="Marra M.A."/>
            <person name="Martienssen R."/>
            <person name="McCombie W.R."/>
            <person name="Wilson R.K."/>
            <person name="Murphy G."/>
            <person name="Bancroft I."/>
            <person name="Volckaert G."/>
            <person name="Wambutt R."/>
            <person name="Duesterhoeft A."/>
            <person name="Stiekema W."/>
            <person name="Pohl T."/>
            <person name="Entian K.-D."/>
            <person name="Terryn N."/>
            <person name="Hartley N."/>
            <person name="Bent E."/>
            <person name="Johnson S."/>
            <person name="Langham S.-A."/>
            <person name="McCullagh B."/>
            <person name="Robben J."/>
            <person name="Grymonprez B."/>
            <person name="Zimmermann W."/>
            <person name="Ramsperger U."/>
            <person name="Wedler H."/>
            <person name="Balke K."/>
            <person name="Wedler E."/>
            <person name="Peters S."/>
            <person name="van Staveren M."/>
            <person name="Dirkse W."/>
            <person name="Mooijman P."/>
            <person name="Klein Lankhorst R."/>
            <person name="Weitzenegger T."/>
            <person name="Bothe G."/>
            <person name="Rose M."/>
            <person name="Hauf J."/>
            <person name="Berneiser S."/>
            <person name="Hempel S."/>
            <person name="Feldpausch M."/>
            <person name="Lamberth S."/>
            <person name="Villarroel R."/>
            <person name="Gielen J."/>
            <person name="Ardiles W."/>
            <person name="Bents O."/>
            <person name="Lemcke K."/>
            <person name="Kolesov G."/>
            <person name="Mayer K.F.X."/>
            <person name="Rudd S."/>
            <person name="Schoof H."/>
            <person name="Schueller C."/>
            <person name="Zaccaria P."/>
            <person name="Mewes H.-W."/>
            <person name="Bevan M."/>
            <person name="Fransz P.F."/>
        </authorList>
    </citation>
    <scope>NUCLEOTIDE SEQUENCE [LARGE SCALE GENOMIC DNA]</scope>
    <source>
        <strain>cv. Columbia</strain>
    </source>
</reference>
<reference key="2">
    <citation type="journal article" date="2017" name="Plant J.">
        <title>Araport11: a complete reannotation of the Arabidopsis thaliana reference genome.</title>
        <authorList>
            <person name="Cheng C.Y."/>
            <person name="Krishnakumar V."/>
            <person name="Chan A.P."/>
            <person name="Thibaud-Nissen F."/>
            <person name="Schobel S."/>
            <person name="Town C.D."/>
        </authorList>
    </citation>
    <scope>GENOME REANNOTATION</scope>
    <source>
        <strain>cv. Columbia</strain>
    </source>
</reference>
<reference key="3">
    <citation type="submission" date="2006-07" db="EMBL/GenBank/DDBJ databases">
        <title>Large-scale analysis of RIKEN Arabidopsis full-length (RAFL) cDNAs.</title>
        <authorList>
            <person name="Totoki Y."/>
            <person name="Seki M."/>
            <person name="Ishida J."/>
            <person name="Nakajima M."/>
            <person name="Enju A."/>
            <person name="Kamiya A."/>
            <person name="Narusaka M."/>
            <person name="Shin-i T."/>
            <person name="Nakagawa M."/>
            <person name="Sakamoto N."/>
            <person name="Oishi K."/>
            <person name="Kohara Y."/>
            <person name="Kobayashi M."/>
            <person name="Toyoda A."/>
            <person name="Sakaki Y."/>
            <person name="Sakurai T."/>
            <person name="Iida K."/>
            <person name="Akiyama K."/>
            <person name="Satou M."/>
            <person name="Toyoda T."/>
            <person name="Konagaya A."/>
            <person name="Carninci P."/>
            <person name="Kawai J."/>
            <person name="Hayashizaki Y."/>
            <person name="Shinozaki K."/>
        </authorList>
    </citation>
    <scope>NUCLEOTIDE SEQUENCE [LARGE SCALE MRNA]</scope>
    <source>
        <strain>cv. Columbia</strain>
    </source>
</reference>
<reference key="4">
    <citation type="submission" date="2002-03" db="EMBL/GenBank/DDBJ databases">
        <title>Full-length cDNA from Arabidopsis thaliana.</title>
        <authorList>
            <person name="Brover V.V."/>
            <person name="Troukhan M.E."/>
            <person name="Alexandrov N.A."/>
            <person name="Lu Y.-P."/>
            <person name="Flavell R.B."/>
            <person name="Feldmann K.A."/>
        </authorList>
    </citation>
    <scope>NUCLEOTIDE SEQUENCE [LARGE SCALE MRNA]</scope>
</reference>
<reference key="5">
    <citation type="journal article" date="2015" name="Plant Cell">
        <title>Remobilization of phytol from chlorophyll degradation is essential for tocopherol synthesis and growth of Arabidopsis.</title>
        <authorList>
            <person name="Vom Dorp K."/>
            <person name="Hoelzl G."/>
            <person name="Plohmann C."/>
            <person name="Eisenhut M."/>
            <person name="Abraham M."/>
            <person name="Weber A.P."/>
            <person name="Hanson A.D."/>
            <person name="Doermann P."/>
        </authorList>
    </citation>
    <scope>GENE FAMILY</scope>
</reference>
<reference key="6">
    <citation type="journal article" date="2011" name="J. Plant Biol.">
        <title>Molecular identification and physiological characterization of a putative novel plasma membrane protein from Arabidopsis involved in glucose response.</title>
        <authorList>
            <person name="Chung M.S."/>
            <person name="Huang P."/>
            <person name="Ha C.M."/>
            <person name="Jun J.H."/>
            <person name="Ahn S.J."/>
            <person name="Zhang F.C."/>
            <person name="Bae H.J."/>
            <person name="Cho B.H."/>
            <person name="Kim C.S."/>
        </authorList>
    </citation>
    <scope>FUNCTION</scope>
    <scope>SUBCELLULAR LOCATION</scope>
    <scope>TISSUE SPECIFICITY</scope>
    <scope>INDUCTION BY GLUCOSE</scope>
</reference>
<reference key="7">
    <citation type="journal article" date="2016" name="Plant Physiol. Biochem.">
        <title>Regulation of Arabidopsis thaliana plasma membrane glucose-responsive regulator (AtPGR) expression by A. thaliana storekeeper-like transcription factor, AtSTKL, modulates glucose response in Arabidopsis.</title>
        <authorList>
            <person name="Chung M.S."/>
            <person name="Lee S."/>
            <person name="Min J.H."/>
            <person name="Huang P."/>
            <person name="Ju H.W."/>
            <person name="Kim C.S."/>
        </authorList>
    </citation>
    <scope>INDUCTION BY STKL1 AND STKL2</scope>
</reference>
<dbReference type="EMBL" id="AF296836">
    <property type="status" value="NOT_ANNOTATED_CDS"/>
    <property type="molecule type" value="Genomic_DNA"/>
</dbReference>
<dbReference type="EMBL" id="CP002688">
    <property type="protein sequence ID" value="AED92767.1"/>
    <property type="molecule type" value="Genomic_DNA"/>
</dbReference>
<dbReference type="EMBL" id="CP002688">
    <property type="protein sequence ID" value="AED92768.1"/>
    <property type="molecule type" value="Genomic_DNA"/>
</dbReference>
<dbReference type="EMBL" id="AK229183">
    <property type="protein sequence ID" value="BAF01053.1"/>
    <property type="molecule type" value="mRNA"/>
</dbReference>
<dbReference type="EMBL" id="AY085046">
    <property type="protein sequence ID" value="AAM61603.1"/>
    <property type="molecule type" value="mRNA"/>
</dbReference>
<dbReference type="RefSeq" id="NP_001190343.1">
    <property type="nucleotide sequence ID" value="NM_001203414.2"/>
</dbReference>
<dbReference type="RefSeq" id="NP_568386.1">
    <property type="nucleotide sequence ID" value="NM_122000.4"/>
</dbReference>
<dbReference type="FunCoup" id="Q0WP96">
    <property type="interactions" value="1745"/>
</dbReference>
<dbReference type="IntAct" id="Q0WP96">
    <property type="interactions" value="5"/>
</dbReference>
<dbReference type="STRING" id="3702.Q0WP96"/>
<dbReference type="GlyGen" id="Q0WP96">
    <property type="glycosylation" value="1 site"/>
</dbReference>
<dbReference type="PaxDb" id="3702-AT5G19930.1"/>
<dbReference type="ProteomicsDB" id="236789"/>
<dbReference type="EnsemblPlants" id="AT5G19930.1">
    <property type="protein sequence ID" value="AT5G19930.1"/>
    <property type="gene ID" value="AT5G19930"/>
</dbReference>
<dbReference type="EnsemblPlants" id="AT5G19930.2">
    <property type="protein sequence ID" value="AT5G19930.2"/>
    <property type="gene ID" value="AT5G19930"/>
</dbReference>
<dbReference type="GeneID" id="832115"/>
<dbReference type="Gramene" id="AT5G19930.1">
    <property type="protein sequence ID" value="AT5G19930.1"/>
    <property type="gene ID" value="AT5G19930"/>
</dbReference>
<dbReference type="Gramene" id="AT5G19930.2">
    <property type="protein sequence ID" value="AT5G19930.2"/>
    <property type="gene ID" value="AT5G19930"/>
</dbReference>
<dbReference type="KEGG" id="ath:AT5G19930"/>
<dbReference type="Araport" id="AT5G19930"/>
<dbReference type="TAIR" id="AT5G19930">
    <property type="gene designation" value="PGR"/>
</dbReference>
<dbReference type="eggNOG" id="KOG4491">
    <property type="taxonomic scope" value="Eukaryota"/>
</dbReference>
<dbReference type="HOGENOM" id="CLU_036918_3_1_1"/>
<dbReference type="InParanoid" id="Q0WP96"/>
<dbReference type="OMA" id="MSSFACC"/>
<dbReference type="OrthoDB" id="30881at2759"/>
<dbReference type="PhylomeDB" id="Q0WP96"/>
<dbReference type="PRO" id="PR:Q0WP96"/>
<dbReference type="Proteomes" id="UP000006548">
    <property type="component" value="Chromosome 5"/>
</dbReference>
<dbReference type="ExpressionAtlas" id="Q0WP96">
    <property type="expression patterns" value="baseline and differential"/>
</dbReference>
<dbReference type="GO" id="GO:0005886">
    <property type="term" value="C:plasma membrane"/>
    <property type="evidence" value="ECO:0007669"/>
    <property type="project" value="UniProtKB-SubCell"/>
</dbReference>
<dbReference type="InterPro" id="IPR002794">
    <property type="entry name" value="DUF92_TMEM19"/>
</dbReference>
<dbReference type="PANTHER" id="PTHR13353:SF14">
    <property type="entry name" value="PROTEIN PGR"/>
    <property type="match status" value="1"/>
</dbReference>
<dbReference type="PANTHER" id="PTHR13353">
    <property type="entry name" value="TRANSMEMBRANE PROTEIN 19"/>
    <property type="match status" value="1"/>
</dbReference>
<dbReference type="Pfam" id="PF01940">
    <property type="entry name" value="DUF92"/>
    <property type="match status" value="1"/>
</dbReference>
<accession>Q0WP96</accession>
<accession>Q8LF53</accession>
<sequence length="288" mass="30518">METSPQFRLIFAVIISSLIAFRSYKRKSLDLSGGIAGFLVMTIHFTAGFRYGALLLVFFLTSSKLTKVGEDKKRRVDVEFKEGGQRNWVQVLCNSGIASVLVVIACTLTGWKDKCLDSKQSEIVTALIGGIIGHYACCNGDTWSSELGVLSDAQPRLITTFKPVKKGTNGGVTKAGLLAALAAGTTVGLTFLIFGLFTASCASDVALKQLLVIPLSALAGLCGSLIDSILGATIQFSGFCSVRNKVVGKPGPTVKKISGVDILDNNGVNFVSILLTSFLTSIASVYIF</sequence>
<proteinExistence type="evidence at transcript level"/>
<feature type="chain" id="PRO_0000435964" description="Protein PGR">
    <location>
        <begin position="1"/>
        <end position="288"/>
    </location>
</feature>
<feature type="transmembrane region" description="Helical" evidence="1">
    <location>
        <begin position="1"/>
        <end position="21"/>
    </location>
</feature>
<feature type="transmembrane region" description="Helical" evidence="1">
    <location>
        <begin position="29"/>
        <end position="49"/>
    </location>
</feature>
<feature type="transmembrane region" description="Helical" evidence="1">
    <location>
        <begin position="91"/>
        <end position="111"/>
    </location>
</feature>
<feature type="transmembrane region" description="Helical" evidence="1">
    <location>
        <begin position="123"/>
        <end position="143"/>
    </location>
</feature>
<feature type="transmembrane region" description="Helical" evidence="1">
    <location>
        <begin position="177"/>
        <end position="197"/>
    </location>
</feature>
<feature type="transmembrane region" description="Helical" evidence="1">
    <location>
        <begin position="210"/>
        <end position="230"/>
    </location>
</feature>
<feature type="transmembrane region" description="Helical" evidence="1">
    <location>
        <begin position="268"/>
        <end position="288"/>
    </location>
</feature>
<feature type="sequence conflict" description="In Ref. 4; AAM61603." evidence="6" ref="4">
    <original>S</original>
    <variation>F</variation>
    <location>
        <position position="216"/>
    </location>
</feature>
<evidence type="ECO:0000255" key="1"/>
<evidence type="ECO:0000269" key="2">
    <source>
    </source>
</evidence>
<evidence type="ECO:0000269" key="3">
    <source ref="6"/>
</evidence>
<evidence type="ECO:0000303" key="4">
    <source>
    </source>
</evidence>
<evidence type="ECO:0000303" key="5">
    <source ref="6"/>
</evidence>
<evidence type="ECO:0000305" key="6"/>
<evidence type="ECO:0000312" key="7">
    <source>
        <dbReference type="Araport" id="AT5G19930"/>
    </source>
</evidence>
<evidence type="ECO:0000312" key="8">
    <source>
        <dbReference type="EMBL" id="BAF01053.1"/>
    </source>
</evidence>
<organism evidence="8">
    <name type="scientific">Arabidopsis thaliana</name>
    <name type="common">Mouse-ear cress</name>
    <dbReference type="NCBI Taxonomy" id="3702"/>
    <lineage>
        <taxon>Eukaryota</taxon>
        <taxon>Viridiplantae</taxon>
        <taxon>Streptophyta</taxon>
        <taxon>Embryophyta</taxon>
        <taxon>Tracheophyta</taxon>
        <taxon>Spermatophyta</taxon>
        <taxon>Magnoliopsida</taxon>
        <taxon>eudicotyledons</taxon>
        <taxon>Gunneridae</taxon>
        <taxon>Pentapetalae</taxon>
        <taxon>rosids</taxon>
        <taxon>malvids</taxon>
        <taxon>Brassicales</taxon>
        <taxon>Brassicaceae</taxon>
        <taxon>Camelineae</taxon>
        <taxon>Arabidopsis</taxon>
    </lineage>
</organism>
<comment type="function">
    <text evidence="3">Involved in the glucose-triggered developmental leaf growth process.</text>
</comment>
<comment type="subcellular location">
    <subcellularLocation>
        <location evidence="3">Cell membrane</location>
        <topology evidence="1">Multi-pass membrane protein</topology>
    </subcellularLocation>
</comment>
<comment type="tissue specificity">
    <text evidence="3">Expressed in the vasculature of leaves, roots, inflorescences, siliques, anther filaments and sepals. Detected primarily in the phloem tissues, including in the root ans shoot apical meristems.</text>
</comment>
<comment type="induction">
    <text evidence="2 3">Up-regulated by glucose (Ref.6). Down-regulated by STKL1 and STKL2 (PubMed:27031427).</text>
</comment>
<comment type="similarity">
    <text evidence="6">Belongs to the TMEM19 family.</text>
</comment>
<protein>
    <recommendedName>
        <fullName evidence="5">Protein PGR</fullName>
        <shortName evidence="5">AtPGR</shortName>
    </recommendedName>
    <alternativeName>
        <fullName evidence="5">Plasma membrane glucose-responsive regulator</fullName>
    </alternativeName>
    <alternativeName>
        <fullName evidence="6">Transmembrane protein 19-like protein</fullName>
    </alternativeName>
    <alternativeName>
        <fullName evidence="4">VTE6-related protein</fullName>
        <shortName evidence="4">VTE6R</shortName>
    </alternativeName>
</protein>